<proteinExistence type="inferred from homology"/>
<protein>
    <recommendedName>
        <fullName evidence="1">Small ribosomal subunit protein uS7</fullName>
    </recommendedName>
    <alternativeName>
        <fullName evidence="2">30S ribosomal protein S7</fullName>
    </alternativeName>
</protein>
<keyword id="KW-0687">Ribonucleoprotein</keyword>
<keyword id="KW-0689">Ribosomal protein</keyword>
<keyword id="KW-0694">RNA-binding</keyword>
<keyword id="KW-0699">rRNA-binding</keyword>
<keyword id="KW-0820">tRNA-binding</keyword>
<dbReference type="EMBL" id="AP006628">
    <property type="protein sequence ID" value="BAD04348.1"/>
    <property type="molecule type" value="Genomic_DNA"/>
</dbReference>
<dbReference type="SMR" id="Q6YQW0"/>
<dbReference type="STRING" id="262768.PAM_263"/>
<dbReference type="KEGG" id="poy:PAM_263"/>
<dbReference type="eggNOG" id="COG0049">
    <property type="taxonomic scope" value="Bacteria"/>
</dbReference>
<dbReference type="HOGENOM" id="CLU_072226_1_1_14"/>
<dbReference type="BioCyc" id="OYEL262768:G1G26-320-MONOMER"/>
<dbReference type="Proteomes" id="UP000002523">
    <property type="component" value="Chromosome"/>
</dbReference>
<dbReference type="GO" id="GO:0015935">
    <property type="term" value="C:small ribosomal subunit"/>
    <property type="evidence" value="ECO:0007669"/>
    <property type="project" value="InterPro"/>
</dbReference>
<dbReference type="GO" id="GO:0019843">
    <property type="term" value="F:rRNA binding"/>
    <property type="evidence" value="ECO:0007669"/>
    <property type="project" value="UniProtKB-UniRule"/>
</dbReference>
<dbReference type="GO" id="GO:0003735">
    <property type="term" value="F:structural constituent of ribosome"/>
    <property type="evidence" value="ECO:0007669"/>
    <property type="project" value="InterPro"/>
</dbReference>
<dbReference type="GO" id="GO:0000049">
    <property type="term" value="F:tRNA binding"/>
    <property type="evidence" value="ECO:0007669"/>
    <property type="project" value="UniProtKB-UniRule"/>
</dbReference>
<dbReference type="GO" id="GO:0006412">
    <property type="term" value="P:translation"/>
    <property type="evidence" value="ECO:0007669"/>
    <property type="project" value="UniProtKB-UniRule"/>
</dbReference>
<dbReference type="CDD" id="cd14869">
    <property type="entry name" value="uS7_Bacteria"/>
    <property type="match status" value="1"/>
</dbReference>
<dbReference type="FunFam" id="1.10.455.10:FF:000001">
    <property type="entry name" value="30S ribosomal protein S7"/>
    <property type="match status" value="1"/>
</dbReference>
<dbReference type="Gene3D" id="1.10.455.10">
    <property type="entry name" value="Ribosomal protein S7 domain"/>
    <property type="match status" value="1"/>
</dbReference>
<dbReference type="HAMAP" id="MF_00480_B">
    <property type="entry name" value="Ribosomal_uS7_B"/>
    <property type="match status" value="1"/>
</dbReference>
<dbReference type="InterPro" id="IPR000235">
    <property type="entry name" value="Ribosomal_uS7"/>
</dbReference>
<dbReference type="InterPro" id="IPR005717">
    <property type="entry name" value="Ribosomal_uS7_bac/org-type"/>
</dbReference>
<dbReference type="InterPro" id="IPR020606">
    <property type="entry name" value="Ribosomal_uS7_CS"/>
</dbReference>
<dbReference type="InterPro" id="IPR023798">
    <property type="entry name" value="Ribosomal_uS7_dom"/>
</dbReference>
<dbReference type="InterPro" id="IPR036823">
    <property type="entry name" value="Ribosomal_uS7_dom_sf"/>
</dbReference>
<dbReference type="NCBIfam" id="TIGR01029">
    <property type="entry name" value="rpsG_bact"/>
    <property type="match status" value="1"/>
</dbReference>
<dbReference type="PANTHER" id="PTHR11205">
    <property type="entry name" value="RIBOSOMAL PROTEIN S7"/>
    <property type="match status" value="1"/>
</dbReference>
<dbReference type="Pfam" id="PF00177">
    <property type="entry name" value="Ribosomal_S7"/>
    <property type="match status" value="1"/>
</dbReference>
<dbReference type="PIRSF" id="PIRSF002122">
    <property type="entry name" value="RPS7p_RPS7a_RPS5e_RPS7o"/>
    <property type="match status" value="1"/>
</dbReference>
<dbReference type="SUPFAM" id="SSF47973">
    <property type="entry name" value="Ribosomal protein S7"/>
    <property type="match status" value="1"/>
</dbReference>
<dbReference type="PROSITE" id="PS00052">
    <property type="entry name" value="RIBOSOMAL_S7"/>
    <property type="match status" value="1"/>
</dbReference>
<comment type="function">
    <text evidence="1">One of the primary rRNA binding proteins, it binds directly to 16S rRNA where it nucleates assembly of the head domain of the 30S subunit. Is located at the subunit interface close to the decoding center, probably blocks exit of the E-site tRNA.</text>
</comment>
<comment type="subunit">
    <text evidence="1">Part of the 30S ribosomal subunit. Contacts proteins S9 and S11.</text>
</comment>
<comment type="similarity">
    <text evidence="1">Belongs to the universal ribosomal protein uS7 family.</text>
</comment>
<evidence type="ECO:0000255" key="1">
    <source>
        <dbReference type="HAMAP-Rule" id="MF_00480"/>
    </source>
</evidence>
<evidence type="ECO:0000305" key="2"/>
<gene>
    <name evidence="1" type="primary">rpsG</name>
    <name type="ordered locus">PAM_263</name>
</gene>
<accession>Q6YQW0</accession>
<name>RS7_ONYPE</name>
<reference key="1">
    <citation type="journal article" date="2004" name="Nat. Genet.">
        <title>Reductive evolution suggested from the complete genome sequence of a plant-pathogenic phytoplasma.</title>
        <authorList>
            <person name="Oshima K."/>
            <person name="Kakizawa S."/>
            <person name="Nishigawa H."/>
            <person name="Jung H.-Y."/>
            <person name="Wei W."/>
            <person name="Suzuki S."/>
            <person name="Arashida R."/>
            <person name="Nakata D."/>
            <person name="Miyata S."/>
            <person name="Ugaki M."/>
            <person name="Namba S."/>
        </authorList>
    </citation>
    <scope>NUCLEOTIDE SEQUENCE [LARGE SCALE GENOMIC DNA]</scope>
    <source>
        <strain>OY-M</strain>
    </source>
</reference>
<feature type="chain" id="PRO_0000124312" description="Small ribosomal subunit protein uS7">
    <location>
        <begin position="1"/>
        <end position="156"/>
    </location>
</feature>
<organism>
    <name type="scientific">Onion yellows phytoplasma (strain OY-M)</name>
    <dbReference type="NCBI Taxonomy" id="262768"/>
    <lineage>
        <taxon>Bacteria</taxon>
        <taxon>Bacillati</taxon>
        <taxon>Mycoplasmatota</taxon>
        <taxon>Mollicutes</taxon>
        <taxon>Acholeplasmatales</taxon>
        <taxon>Acholeplasmataceae</taxon>
        <taxon>Candidatus Phytoplasma</taxon>
        <taxon>16SrI (Aster yellows group)</taxon>
    </lineage>
</organism>
<sequence>MSRKGHIKKRDVQPDPVYNSKLVTKIINIIMEDGKKGKAQTIFYQALKQVKTITNREPIKVFHEALNNIMPVLEVRTRRMGGQNYQVPSEVRPERRQSLGLRWIVKYTKESNEKTMEERLAKEIVDASLGNGVLVKKREETHRMAEANKAFAHYRW</sequence>